<dbReference type="EMBL" id="CP001139">
    <property type="protein sequence ID" value="ACH65009.1"/>
    <property type="molecule type" value="Genomic_DNA"/>
</dbReference>
<dbReference type="RefSeq" id="WP_005417210.1">
    <property type="nucleotide sequence ID" value="NC_011184.1"/>
</dbReference>
<dbReference type="SMR" id="B5FG05"/>
<dbReference type="GeneID" id="54162854"/>
<dbReference type="KEGG" id="vfm:VFMJ11_0221"/>
<dbReference type="HOGENOM" id="CLU_072226_1_1_6"/>
<dbReference type="Proteomes" id="UP000001857">
    <property type="component" value="Chromosome I"/>
</dbReference>
<dbReference type="GO" id="GO:0015935">
    <property type="term" value="C:small ribosomal subunit"/>
    <property type="evidence" value="ECO:0007669"/>
    <property type="project" value="InterPro"/>
</dbReference>
<dbReference type="GO" id="GO:0019843">
    <property type="term" value="F:rRNA binding"/>
    <property type="evidence" value="ECO:0007669"/>
    <property type="project" value="UniProtKB-UniRule"/>
</dbReference>
<dbReference type="GO" id="GO:0003735">
    <property type="term" value="F:structural constituent of ribosome"/>
    <property type="evidence" value="ECO:0007669"/>
    <property type="project" value="InterPro"/>
</dbReference>
<dbReference type="GO" id="GO:0000049">
    <property type="term" value="F:tRNA binding"/>
    <property type="evidence" value="ECO:0007669"/>
    <property type="project" value="UniProtKB-UniRule"/>
</dbReference>
<dbReference type="GO" id="GO:0006412">
    <property type="term" value="P:translation"/>
    <property type="evidence" value="ECO:0007669"/>
    <property type="project" value="UniProtKB-UniRule"/>
</dbReference>
<dbReference type="CDD" id="cd14869">
    <property type="entry name" value="uS7_Bacteria"/>
    <property type="match status" value="1"/>
</dbReference>
<dbReference type="FunFam" id="1.10.455.10:FF:000001">
    <property type="entry name" value="30S ribosomal protein S7"/>
    <property type="match status" value="1"/>
</dbReference>
<dbReference type="Gene3D" id="1.10.455.10">
    <property type="entry name" value="Ribosomal protein S7 domain"/>
    <property type="match status" value="1"/>
</dbReference>
<dbReference type="HAMAP" id="MF_00480_B">
    <property type="entry name" value="Ribosomal_uS7_B"/>
    <property type="match status" value="1"/>
</dbReference>
<dbReference type="InterPro" id="IPR000235">
    <property type="entry name" value="Ribosomal_uS7"/>
</dbReference>
<dbReference type="InterPro" id="IPR005717">
    <property type="entry name" value="Ribosomal_uS7_bac/org-type"/>
</dbReference>
<dbReference type="InterPro" id="IPR020606">
    <property type="entry name" value="Ribosomal_uS7_CS"/>
</dbReference>
<dbReference type="InterPro" id="IPR023798">
    <property type="entry name" value="Ribosomal_uS7_dom"/>
</dbReference>
<dbReference type="InterPro" id="IPR036823">
    <property type="entry name" value="Ribosomal_uS7_dom_sf"/>
</dbReference>
<dbReference type="NCBIfam" id="TIGR01029">
    <property type="entry name" value="rpsG_bact"/>
    <property type="match status" value="1"/>
</dbReference>
<dbReference type="PANTHER" id="PTHR11205">
    <property type="entry name" value="RIBOSOMAL PROTEIN S7"/>
    <property type="match status" value="1"/>
</dbReference>
<dbReference type="Pfam" id="PF00177">
    <property type="entry name" value="Ribosomal_S7"/>
    <property type="match status" value="1"/>
</dbReference>
<dbReference type="PIRSF" id="PIRSF002122">
    <property type="entry name" value="RPS7p_RPS7a_RPS5e_RPS7o"/>
    <property type="match status" value="1"/>
</dbReference>
<dbReference type="SUPFAM" id="SSF47973">
    <property type="entry name" value="Ribosomal protein S7"/>
    <property type="match status" value="1"/>
</dbReference>
<dbReference type="PROSITE" id="PS00052">
    <property type="entry name" value="RIBOSOMAL_S7"/>
    <property type="match status" value="1"/>
</dbReference>
<sequence length="156" mass="17761">MPRRRVIGQRKILPDPKFKSELLAKFVNIVMVDGKKSTAEKIVYGALDLMAEKSGKDHLAVFEEALENVRPAVEVKSRRVGGSTYQVPVEVRPVRRNALAMRWMVEAARKRGEKSMAQRLANEMLDASENKGTAVKKREDVHRMADANKAFAHYRW</sequence>
<protein>
    <recommendedName>
        <fullName evidence="1">Small ribosomal subunit protein uS7</fullName>
    </recommendedName>
    <alternativeName>
        <fullName evidence="2">30S ribosomal protein S7</fullName>
    </alternativeName>
</protein>
<comment type="function">
    <text evidence="1">One of the primary rRNA binding proteins, it binds directly to 16S rRNA where it nucleates assembly of the head domain of the 30S subunit. Is located at the subunit interface close to the decoding center, probably blocks exit of the E-site tRNA.</text>
</comment>
<comment type="subunit">
    <text evidence="1">Part of the 30S ribosomal subunit. Contacts proteins S9 and S11.</text>
</comment>
<comment type="similarity">
    <text evidence="1">Belongs to the universal ribosomal protein uS7 family.</text>
</comment>
<accession>B5FG05</accession>
<evidence type="ECO:0000255" key="1">
    <source>
        <dbReference type="HAMAP-Rule" id="MF_00480"/>
    </source>
</evidence>
<evidence type="ECO:0000305" key="2"/>
<name>RS7_ALIFM</name>
<reference key="1">
    <citation type="submission" date="2008-08" db="EMBL/GenBank/DDBJ databases">
        <title>Complete sequence of Vibrio fischeri strain MJ11.</title>
        <authorList>
            <person name="Mandel M.J."/>
            <person name="Stabb E.V."/>
            <person name="Ruby E.G."/>
            <person name="Ferriera S."/>
            <person name="Johnson J."/>
            <person name="Kravitz S."/>
            <person name="Beeson K."/>
            <person name="Sutton G."/>
            <person name="Rogers Y.-H."/>
            <person name="Friedman R."/>
            <person name="Frazier M."/>
            <person name="Venter J.C."/>
        </authorList>
    </citation>
    <scope>NUCLEOTIDE SEQUENCE [LARGE SCALE GENOMIC DNA]</scope>
    <source>
        <strain>MJ11</strain>
    </source>
</reference>
<feature type="chain" id="PRO_1000126023" description="Small ribosomal subunit protein uS7">
    <location>
        <begin position="1"/>
        <end position="156"/>
    </location>
</feature>
<keyword id="KW-0687">Ribonucleoprotein</keyword>
<keyword id="KW-0689">Ribosomal protein</keyword>
<keyword id="KW-0694">RNA-binding</keyword>
<keyword id="KW-0699">rRNA-binding</keyword>
<keyword id="KW-0820">tRNA-binding</keyword>
<proteinExistence type="inferred from homology"/>
<organism>
    <name type="scientific">Aliivibrio fischeri (strain MJ11)</name>
    <name type="common">Vibrio fischeri</name>
    <dbReference type="NCBI Taxonomy" id="388396"/>
    <lineage>
        <taxon>Bacteria</taxon>
        <taxon>Pseudomonadati</taxon>
        <taxon>Pseudomonadota</taxon>
        <taxon>Gammaproteobacteria</taxon>
        <taxon>Vibrionales</taxon>
        <taxon>Vibrionaceae</taxon>
        <taxon>Aliivibrio</taxon>
    </lineage>
</organism>
<gene>
    <name evidence="1" type="primary">rpsG</name>
    <name type="ordered locus">VFMJ11_0221</name>
</gene>